<evidence type="ECO:0000255" key="1"/>
<evidence type="ECO:0000269" key="2">
    <source>
    </source>
</evidence>
<evidence type="ECO:0000269" key="3">
    <source>
    </source>
</evidence>
<evidence type="ECO:0000269" key="4">
    <source>
    </source>
</evidence>
<evidence type="ECO:0000269" key="5">
    <source>
    </source>
</evidence>
<evidence type="ECO:0000269" key="6">
    <source>
    </source>
</evidence>
<evidence type="ECO:0000269" key="7">
    <source>
    </source>
</evidence>
<evidence type="ECO:0000269" key="8">
    <source>
    </source>
</evidence>
<evidence type="ECO:0000269" key="9">
    <source>
    </source>
</evidence>
<evidence type="ECO:0000269" key="10">
    <source>
    </source>
</evidence>
<evidence type="ECO:0000303" key="11">
    <source>
    </source>
</evidence>
<evidence type="ECO:0000303" key="12">
    <source>
    </source>
</evidence>
<evidence type="ECO:0000305" key="13"/>
<evidence type="ECO:0000305" key="14">
    <source>
    </source>
</evidence>
<evidence type="ECO:0000305" key="15">
    <source>
    </source>
</evidence>
<evidence type="ECO:0000305" key="16">
    <source>
    </source>
</evidence>
<evidence type="ECO:0000312" key="17">
    <source>
        <dbReference type="EMBL" id="AAC77178.1"/>
    </source>
</evidence>
<evidence type="ECO:0000312" key="18">
    <source>
        <dbReference type="EMBL" id="BAE78222.1"/>
    </source>
</evidence>
<evidence type="ECO:0007744" key="19">
    <source>
        <dbReference type="PDB" id="5VTG"/>
    </source>
</evidence>
<evidence type="ECO:0007829" key="20">
    <source>
        <dbReference type="PDB" id="5VTG"/>
    </source>
</evidence>
<reference key="1">
    <citation type="journal article" date="1995" name="Nucleic Acids Res.">
        <title>Analysis of the Escherichia coli genome VI: DNA sequence of the region from 92.8 through 100 minutes.</title>
        <authorList>
            <person name="Burland V.D."/>
            <person name="Plunkett G. III"/>
            <person name="Sofia H.J."/>
            <person name="Daniels D.L."/>
            <person name="Blattner F.R."/>
        </authorList>
    </citation>
    <scope>NUCLEOTIDE SEQUENCE [LARGE SCALE GENOMIC DNA]</scope>
    <source>
        <strain>K12 / MG1655 / ATCC 47076</strain>
    </source>
</reference>
<reference key="2">
    <citation type="journal article" date="1997" name="Science">
        <title>The complete genome sequence of Escherichia coli K-12.</title>
        <authorList>
            <person name="Blattner F.R."/>
            <person name="Plunkett G. III"/>
            <person name="Bloch C.A."/>
            <person name="Perna N.T."/>
            <person name="Burland V."/>
            <person name="Riley M."/>
            <person name="Collado-Vides J."/>
            <person name="Glasner J.D."/>
            <person name="Rode C.K."/>
            <person name="Mayhew G.F."/>
            <person name="Gregor J."/>
            <person name="Davis N.W."/>
            <person name="Kirkpatrick H.A."/>
            <person name="Goeden M.A."/>
            <person name="Rose D.J."/>
            <person name="Mau B."/>
            <person name="Shao Y."/>
        </authorList>
    </citation>
    <scope>NUCLEOTIDE SEQUENCE [LARGE SCALE GENOMIC DNA]</scope>
    <scope>SEQUENCE REVISION</scope>
    <source>
        <strain>K12 / MG1655 / ATCC 47076</strain>
    </source>
</reference>
<reference key="3">
    <citation type="journal article" date="2006" name="Mol. Syst. Biol.">
        <title>Highly accurate genome sequences of Escherichia coli K-12 strains MG1655 and W3110.</title>
        <authorList>
            <person name="Hayashi K."/>
            <person name="Morooka N."/>
            <person name="Yamamoto Y."/>
            <person name="Fujita K."/>
            <person name="Isono K."/>
            <person name="Choi S."/>
            <person name="Ohtsubo E."/>
            <person name="Baba T."/>
            <person name="Wanner B.L."/>
            <person name="Mori H."/>
            <person name="Horiuchi T."/>
        </authorList>
    </citation>
    <scope>NUCLEOTIDE SEQUENCE [LARGE SCALE GENOMIC DNA]</scope>
    <source>
        <strain>K12 / W3110 / ATCC 27325 / DSM 5911</strain>
    </source>
</reference>
<reference key="4">
    <citation type="journal article" date="2012" name="Nat. Struct. Mol. Biol.">
        <title>Discovery of an archetypal protein transport system in bacterial outer membranes.</title>
        <authorList>
            <person name="Selkrig J."/>
            <person name="Mosbahi K."/>
            <person name="Webb C.T."/>
            <person name="Belousoff M.J."/>
            <person name="Perry A.J."/>
            <person name="Wells T.J."/>
            <person name="Morris F."/>
            <person name="Leyton D.L."/>
            <person name="Totsika M."/>
            <person name="Phan M.D."/>
            <person name="Celik N."/>
            <person name="Kelly M."/>
            <person name="Oates C."/>
            <person name="Hartland E.L."/>
            <person name="Robins-Browne R.M."/>
            <person name="Ramarathinam S.H."/>
            <person name="Purcell A.W."/>
            <person name="Schembri M.A."/>
            <person name="Strugnell R.A."/>
            <person name="Henderson I.R."/>
            <person name="Walker D."/>
            <person name="Lithgow T."/>
        </authorList>
    </citation>
    <scope>PROTEIN SEQUENCE OF 1-6</scope>
    <scope>FUNCTION IN SECRETION OF AUTOTRANSPORTERS</scope>
    <scope>SUBCELLULAR LOCATION</scope>
    <scope>SUBUNIT</scope>
    <scope>FORMYLATION AT MET-1</scope>
    <scope>DISRUPTION PHENOTYPE</scope>
    <source>
        <strain>K12 / MG1655 / ATCC 47076</strain>
    </source>
</reference>
<reference key="5">
    <citation type="journal article" date="2014" name="Nat. Commun.">
        <title>Reconstitution of a nanomachine driving the assembly of proteins into bacterial outer membranes.</title>
        <authorList>
            <person name="Shen H.H."/>
            <person name="Leyton D.L."/>
            <person name="Shiota T."/>
            <person name="Belousoff M.J."/>
            <person name="Noinaj N."/>
            <person name="Lu J."/>
            <person name="Holt S.A."/>
            <person name="Tan K."/>
            <person name="Selkrig J."/>
            <person name="Webb C.T."/>
            <person name="Buchanan S.K."/>
            <person name="Martin L.L."/>
            <person name="Lithgow T."/>
        </authorList>
    </citation>
    <scope>FUNCTION</scope>
    <scope>SUBUNIT</scope>
    <scope>SUBCELLULAR LOCATION</scope>
    <scope>DOMAIN</scope>
    <scope>TOPOLOGY</scope>
    <source>
        <strain>K12 / BW25113</strain>
    </source>
</reference>
<reference key="6">
    <citation type="journal article" date="2015" name="Genome Biol. Evol.">
        <title>Evolution of the Translocation and Assembly Module (TAM).</title>
        <authorList>
            <person name="Heinz E."/>
            <person name="Selkrig J."/>
            <person name="Belousoff M.J."/>
            <person name="Lithgow T."/>
        </authorList>
    </citation>
    <scope>DOMAIN</scope>
    <scope>TAXONOMIC DISTRIBUTION</scope>
</reference>
<reference key="7">
    <citation type="journal article" date="2015" name="Sci. Rep.">
        <title>Conserved features in TamA enable interaction with TamB to drive the activity of the translocation and assembly module.</title>
        <authorList>
            <person name="Selkrig J."/>
            <person name="Belousoff M.J."/>
            <person name="Headey S.J."/>
            <person name="Heinz E."/>
            <person name="Shiota T."/>
            <person name="Shen H.H."/>
            <person name="Beckham S.A."/>
            <person name="Bamert R.S."/>
            <person name="Phan M.D."/>
            <person name="Schembri M.A."/>
            <person name="Wilce M.C."/>
            <person name="Scanlon M.J."/>
            <person name="Strugnell R.A."/>
            <person name="Lithgow T."/>
        </authorList>
    </citation>
    <scope>FUNCTION</scope>
    <scope>SUBUNIT</scope>
</reference>
<reference key="8">
    <citation type="journal article" date="2021" name="MBio">
        <title>YhdP, TamB, and YdbH Are Redundant but Essential for Growth and Lipid Homeostasis of the Gram-Negative Outer Membrane.</title>
        <authorList>
            <person name="Ruiz N."/>
            <person name="Davis R.M."/>
            <person name="Kumar S."/>
        </authorList>
    </citation>
    <scope>FUNCTION</scope>
    <scope>DISRUPTION PHENOTYPE</scope>
    <source>
        <strain>K12 / MG1655 / ATCC 47076</strain>
    </source>
</reference>
<reference key="9">
    <citation type="journal article" date="2022" name="PLoS Genet.">
        <title>Absence of YhdP, TamB, and YdbH leads to defects in glycerophospholipid transport and cell morphology in Gram-negative bacteria.</title>
        <authorList>
            <person name="Douglass M.V."/>
            <person name="McLean A.B."/>
            <person name="Trent M.S."/>
        </authorList>
    </citation>
    <scope>FUNCTION</scope>
    <scope>DISRUPTION PHENOTYPE</scope>
    <source>
        <strain>K12</strain>
    </source>
</reference>
<reference key="10">
    <citation type="journal article" date="2024" name="PLoS Genet.">
        <title>Genetic evidence for functional diversification of gram-negative intermembrane phospholipid transporters.</title>
        <authorList>
            <person name="Rai A.K."/>
            <person name="Sawasato K."/>
            <person name="Bennett H.C."/>
            <person name="Kozlova A."/>
            <person name="Sparagna G.C."/>
            <person name="Bogdanov M."/>
            <person name="Mitchell A.M."/>
        </authorList>
    </citation>
    <scope>FUNCTION</scope>
</reference>
<reference key="11">
    <citation type="journal article" date="2024" name="Nat. Commun.">
        <title>The translocation assembly module (TAM) catalyzes the assembly of bacterial outer membrane proteins in vitro.</title>
        <authorList>
            <person name="Wang X."/>
            <person name="Nyenhuis S.B."/>
            <person name="Bernstein H.D."/>
        </authorList>
    </citation>
    <scope>FUNCTION</scope>
    <scope>SUBUNIT</scope>
</reference>
<reference evidence="19" key="12">
    <citation type="journal article" date="2017" name="Structure">
        <title>The Structure of a Conserved Domain of TamB Reveals a Hydrophobic beta Taco Fold.</title>
        <authorList>
            <person name="Josts I."/>
            <person name="Stubenrauch C.J."/>
            <person name="Vadlamani G."/>
            <person name="Mosbahi K."/>
            <person name="Walker D."/>
            <person name="Lithgow T."/>
            <person name="Grinter R."/>
        </authorList>
    </citation>
    <scope>X-RAY CRYSTALLOGRAPHY (1.86 ANGSTROMS) OF 963-1138</scope>
    <scope>FUNCTION</scope>
    <scope>DOMAIN</scope>
    <scope>MUTAGENESIS OF LEU-1049 AND ILE-1102</scope>
</reference>
<dbReference type="EMBL" id="U14003">
    <property type="protein sequence ID" value="AAA97117.1"/>
    <property type="status" value="ALT_FRAME"/>
    <property type="molecule type" value="Genomic_DNA"/>
</dbReference>
<dbReference type="EMBL" id="U14003">
    <property type="protein sequence ID" value="AAA97118.1"/>
    <property type="status" value="ALT_FRAME"/>
    <property type="molecule type" value="Genomic_DNA"/>
</dbReference>
<dbReference type="EMBL" id="U00096">
    <property type="protein sequence ID" value="AAC77178.1"/>
    <property type="molecule type" value="Genomic_DNA"/>
</dbReference>
<dbReference type="EMBL" id="AP009048">
    <property type="protein sequence ID" value="BAE78222.1"/>
    <property type="molecule type" value="Genomic_DNA"/>
</dbReference>
<dbReference type="PIR" id="H65233">
    <property type="entry name" value="H65233"/>
</dbReference>
<dbReference type="RefSeq" id="NP_418642.1">
    <property type="nucleotide sequence ID" value="NC_000913.3"/>
</dbReference>
<dbReference type="RefSeq" id="WP_000060911.1">
    <property type="nucleotide sequence ID" value="NZ_JACEFS010000014.1"/>
</dbReference>
<dbReference type="PDB" id="5VTG">
    <property type="method" value="X-ray"/>
    <property type="resolution" value="1.86 A"/>
    <property type="chains" value="A/B=963-1138"/>
</dbReference>
<dbReference type="PDBsum" id="5VTG"/>
<dbReference type="SMR" id="P39321"/>
<dbReference type="BioGRID" id="4259309">
    <property type="interactions" value="410"/>
</dbReference>
<dbReference type="ComplexPortal" id="CPX-5890">
    <property type="entry name" value="Translocation and assembly module complex"/>
</dbReference>
<dbReference type="DIP" id="DIP-12942N"/>
<dbReference type="FunCoup" id="P39321">
    <property type="interactions" value="77"/>
</dbReference>
<dbReference type="IntAct" id="P39321">
    <property type="interactions" value="7"/>
</dbReference>
<dbReference type="STRING" id="511145.b4221"/>
<dbReference type="TCDB" id="9.B.121.6.2">
    <property type="family name" value="the asma (asma) family"/>
</dbReference>
<dbReference type="jPOST" id="P39321"/>
<dbReference type="PaxDb" id="511145-b4221"/>
<dbReference type="EnsemblBacteria" id="AAC77178">
    <property type="protein sequence ID" value="AAC77178"/>
    <property type="gene ID" value="b4221"/>
</dbReference>
<dbReference type="GeneID" id="948742"/>
<dbReference type="KEGG" id="ecj:JW4180"/>
<dbReference type="KEGG" id="eco:b4221"/>
<dbReference type="KEGG" id="ecoc:C3026_22800"/>
<dbReference type="PATRIC" id="fig|1411691.4.peg.2479"/>
<dbReference type="EchoBASE" id="EB2407"/>
<dbReference type="eggNOG" id="COG2911">
    <property type="taxonomic scope" value="Bacteria"/>
</dbReference>
<dbReference type="HOGENOM" id="CLU_002338_0_1_6"/>
<dbReference type="InParanoid" id="P39321"/>
<dbReference type="OMA" id="NTAKQWP"/>
<dbReference type="OrthoDB" id="5555605at2"/>
<dbReference type="PhylomeDB" id="P39321"/>
<dbReference type="BioCyc" id="EcoCyc:G7875-MONOMER"/>
<dbReference type="PRO" id="PR:P39321"/>
<dbReference type="Proteomes" id="UP000000625">
    <property type="component" value="Chromosome"/>
</dbReference>
<dbReference type="GO" id="GO:0009279">
    <property type="term" value="C:cell outer membrane"/>
    <property type="evidence" value="ECO:0000314"/>
    <property type="project" value="ComplexPortal"/>
</dbReference>
<dbReference type="GO" id="GO:0005886">
    <property type="term" value="C:plasma membrane"/>
    <property type="evidence" value="ECO:0000314"/>
    <property type="project" value="ComplexPortal"/>
</dbReference>
<dbReference type="GO" id="GO:0097347">
    <property type="term" value="C:TAM protein secretion complex"/>
    <property type="evidence" value="ECO:0000314"/>
    <property type="project" value="EcoCyc"/>
</dbReference>
<dbReference type="GO" id="GO:0089705">
    <property type="term" value="P:protein localization to outer membrane"/>
    <property type="evidence" value="ECO:0000314"/>
    <property type="project" value="ComplexPortal"/>
</dbReference>
<dbReference type="GO" id="GO:0009306">
    <property type="term" value="P:protein secretion"/>
    <property type="evidence" value="ECO:0000315"/>
    <property type="project" value="EcoCyc"/>
</dbReference>
<dbReference type="InterPro" id="IPR007452">
    <property type="entry name" value="TamB"/>
</dbReference>
<dbReference type="PANTHER" id="PTHR36985">
    <property type="entry name" value="TRANSLOCATION AND ASSEMBLY MODULE SUBUNIT TAMB"/>
    <property type="match status" value="1"/>
</dbReference>
<dbReference type="PANTHER" id="PTHR36985:SF1">
    <property type="entry name" value="TRANSLOCATION AND ASSEMBLY MODULE SUBUNIT TAMB"/>
    <property type="match status" value="1"/>
</dbReference>
<dbReference type="Pfam" id="PF04357">
    <property type="entry name" value="TamB"/>
    <property type="match status" value="1"/>
</dbReference>
<proteinExistence type="evidence at protein level"/>
<gene>
    <name evidence="11" type="primary">tamB</name>
    <name evidence="17" type="synonym">ytfN</name>
    <name evidence="17" type="synonym">ytfO</name>
    <name evidence="17" type="ordered locus">b4221</name>
    <name evidence="18" type="ordered locus">JW4180</name>
</gene>
<organism>
    <name type="scientific">Escherichia coli (strain K12)</name>
    <dbReference type="NCBI Taxonomy" id="83333"/>
    <lineage>
        <taxon>Bacteria</taxon>
        <taxon>Pseudomonadati</taxon>
        <taxon>Pseudomonadota</taxon>
        <taxon>Gammaproteobacteria</taxon>
        <taxon>Enterobacterales</taxon>
        <taxon>Enterobacteriaceae</taxon>
        <taxon>Escherichia</taxon>
    </lineage>
</organism>
<accession>P39321</accession>
<accession>P39322</accession>
<accession>P76802</accession>
<accession>Q2M684</accession>
<feature type="chain" id="PRO_0000169830" description="Translocation and assembly module subunit TamB">
    <location>
        <begin position="1"/>
        <end position="1259"/>
    </location>
</feature>
<feature type="topological domain" description="Cytoplasmic" evidence="13">
    <location>
        <begin position="1"/>
        <end position="6"/>
    </location>
</feature>
<feature type="transmembrane region" description="Helical; Signal-anchor for type II membrane protein" evidence="1">
    <location>
        <begin position="7"/>
        <end position="27"/>
    </location>
</feature>
<feature type="topological domain" description="Periplasmic" evidence="3">
    <location>
        <begin position="28"/>
        <end position="1259"/>
    </location>
</feature>
<feature type="modified residue" description="N-formylmethionine" evidence="2">
    <location>
        <position position="1"/>
    </location>
</feature>
<feature type="mutagenesis site" description="Can complement a tamB null-phenotype. Mutation does not affect the assembly of FimD. Does not affect interaction with TamA." evidence="6">
    <original>L</original>
    <variation>E</variation>
    <location>
        <position position="1049"/>
    </location>
</feature>
<feature type="mutagenesis site" description="Can only partly complement a tamB null-phenotype. Mutation significantly impairs the assembly of FimD. Does not affect interaction with TamA." evidence="6">
    <original>I</original>
    <variation>R</variation>
    <location>
        <position position="1102"/>
    </location>
</feature>
<feature type="strand" evidence="20">
    <location>
        <begin position="977"/>
        <end position="993"/>
    </location>
</feature>
<feature type="strand" evidence="20">
    <location>
        <begin position="1026"/>
        <end position="1042"/>
    </location>
</feature>
<feature type="strand" evidence="20">
    <location>
        <begin position="1045"/>
        <end position="1058"/>
    </location>
</feature>
<feature type="strand" evidence="20">
    <location>
        <begin position="1061"/>
        <end position="1077"/>
    </location>
</feature>
<feature type="strand" evidence="20">
    <location>
        <begin position="1080"/>
        <end position="1093"/>
    </location>
</feature>
<feature type="strand" evidence="20">
    <location>
        <begin position="1099"/>
        <end position="1105"/>
    </location>
</feature>
<feature type="strand" evidence="20">
    <location>
        <begin position="1111"/>
        <end position="1113"/>
    </location>
</feature>
<feature type="strand" evidence="20">
    <location>
        <begin position="1118"/>
        <end position="1124"/>
    </location>
</feature>
<feature type="strand" evidence="20">
    <location>
        <begin position="1129"/>
        <end position="1135"/>
    </location>
</feature>
<protein>
    <recommendedName>
        <fullName evidence="11">Translocation and assembly module subunit TamB</fullName>
    </recommendedName>
    <alternativeName>
        <fullName>Autotransporter assembly factor TamB</fullName>
    </alternativeName>
    <alternativeName>
        <fullName evidence="12">Intermembrane phospholipid transporter TamB</fullName>
    </alternativeName>
    <alternativeName>
        <fullName evidence="13">Phospholipid transport protein TamB</fullName>
    </alternativeName>
</protein>
<sequence>MSLWKKISLGVVIVILLLLGSVAFLVGTTSGLHLVFKAADRWVPGLDIGKVTGGWRDLTLSDVRYEQPGVAVKAGNLHLAVGLECLWNSSVCINDLALKDIQVNIDSKKMPPSEQVEEEEDSGPLDLSTPYPITLTRVALDNVNIKIDDTTVSVMDFTSGLNWQEKTLTLKPTSLKGLLIALPKVAEVAQEEVVEPKIENPQPDEKPLGETLKDLFSRPVLPEMTDVHLPLNLNIEEFKGEQLRVTGDTDITVSTMLLKVSSIDGNTKLDALDIDSSQGIVNASGTAQLSDNWPVDITLNSTLNVEPLKGEKVKLKMGGALREQLEIGVNLSGPVDMDLRAQTRLAEAGLPLNVEVNSKQLYWPFTGEKQYQADDLKLKLTGKMTDYTLSMRTAVKGQEIPPATITLDAKGNEQQVNLDKLTVAALEGKTELKALLDWQQAISWRGELTLNGINTAKEFPDWPSKLNGLIKTRGSLYGGTWQMDVPELKLTGNVKQNKVNVDGTLKGNSYMQWMIPGLHLELGPNSAEVKGELGVKDLNLDATINAPGLDNALPGLGGTAKGLVKVRGTVEAPQLLADITARGLRWQELSVAQVRVEGDIKSTDQIAGKLDVRVEQISQPDVNINLVTLNAKGSEKQHELQLRIQGEPVSGQLNLAGSFDRKEERWKGTLSNTRFQTPVGPWSLTRDIALDYRNKEQKISIGPHCWLNPNAELCVPQTIDAGAEGRAVVNLNRFDLAMLKPFMPETTQASGIFTGKADVAWDTTKEGLPQGSITLSGRNVQVTQTVNDAALPVAFQTLNLTAELRNNRAELGWTIRLTNNGQFDGQVQVTDPQGRRNLGGNVNIRNFNLAMINPIFTRGEKAAGMVSANLRLGGDVQSPQLFGQLQVTGVDIDGNFMPFDMQPSQLAVNFNGMRSTLAGTVRTQQGEIYLNGDADWSQIENWRARVTAKGSKVRITVPPMVRMDVSPDVVFEATPNLFTLDGRVDVPWARIVVHDLPESAVGVSSDVVMLNDNLQPEEPKTASIPINSNLIVHVGNNVRIDAFGLKARLTGDLNVVQDKQGLGLNGQINIPEGRFHAYGQDLIVRKGELLFSGPPDQPYLNIEAIRNPDATEDDVIAGVRVTGLADEPKAEIFSDPAMSQQAALSYLLRGQGLESDQSDSAAMTSMLIGLGVAQSGQIVGKIGETFGVSNLALDTQGVGDSSQVVVSGYVLPGLQVKYGVGIFDSIATLTLRYRLMPKLYLEAVSGVDQALDLLYQFEF</sequence>
<name>TAMB_ECOLI</name>
<keyword id="KW-0002">3D-structure</keyword>
<keyword id="KW-0997">Cell inner membrane</keyword>
<keyword id="KW-1003">Cell membrane</keyword>
<keyword id="KW-0903">Direct protein sequencing</keyword>
<keyword id="KW-0291">Formylation</keyword>
<keyword id="KW-0472">Membrane</keyword>
<keyword id="KW-1185">Reference proteome</keyword>
<keyword id="KW-0735">Signal-anchor</keyword>
<keyword id="KW-0812">Transmembrane</keyword>
<keyword id="KW-1133">Transmembrane helix</keyword>
<comment type="function">
    <text evidence="2 3 5 6 10">Component of the translocation and assembly module (TAM), which facilitates the insertion and assembly of specific beta-barrel proteins into the outer membrane (PubMed:22466966, PubMed:25341963, PubMed:29129383, PubMed:39174534). Promotes the assembly and secretion across the outer membrane of a subset of autotransporters, such as Ag43 (PubMed:22466966, PubMed:25341963). Involved in the assembly of the outer membrane usher protein FimD (PubMed:29129383). In vitro, when TAM is reconstituted into preformed liposomes, it can promote the assembly of several outer membrane proteins, including OmpA, EspP, Ag43 and FadL (PubMed:39174534). TamA is sufficient to catalyze a low level of outer membrane protein (OMP) assembly, but both TamA and TamB are required for efficient OMP assembly (PubMed:39174534). TamB may regulate TamA activity (PubMed:25341963). It could regulate conformational changes in TamA to drive its function in OMP assembly (PubMed:26243377). It could also act as a chaperone that facilitate the transport of nascent membrane proteins across the periplasm to TamA in the outer membrane (PubMed:29129383).</text>
</comment>
<comment type="function">
    <text evidence="7 8 9 10">In addition, is involved in outer membrane lipid homeostasis (PubMed:34781743, PubMed:35226662, PubMed:38913742). Likely transports phospholipids between the inner membrane and the outer membrane (PubMed:34781743, PubMed:35226662, PubMed:38913742). It would provide a bridge-like structure that protects phospholipids as they travel across the periplasm (PubMed:34781743). One possible explanation for the apparent dual function of TAM is that TamB is a somewhat generic transporter of hydrophobic molecules (PubMed:39174534).</text>
</comment>
<comment type="function">
    <text evidence="7 9">TamB, YdbH and YhdP are redundant, but not equivalent, in performing an essential function for growth and maintaining lipid homeostasis in the outer membrane (PubMed:34781743). The transport functions of TamB and YhdP could be differentiated according to the fatty acid saturation state of the phospholipids, with TamB transporting more unsaturated phospholipids and YhdP more saturated phospholipids (PubMed:38913742). Any of these three proteins is sufficient for growth (PubMed:34781743).</text>
</comment>
<comment type="subunit">
    <text evidence="2 3 5 10">Interacts with TamA to form the translocation and assembly module (TAM).</text>
</comment>
<comment type="interaction">
    <interactant intactId="EBI-1117885">
        <id>P39321</id>
    </interactant>
    <interactant intactId="EBI-1114298">
        <id>P0ADE4</id>
        <label>tamA</label>
    </interactant>
    <organismsDiffer>false</organismsDiffer>
    <experiments>3</experiments>
</comment>
<comment type="subcellular location">
    <subcellularLocation>
        <location evidence="2 15">Cell inner membrane</location>
        <topology evidence="14">Single-pass membrane protein</topology>
        <orientation evidence="3 14 16">Periplasmic side</orientation>
    </subcellularLocation>
</comment>
<comment type="domain">
    <text evidence="3 4 6">The periplasmic domain is elongated (up to 160 Angstroms long) and forms contacts with the N-terminal POTRA domains of TamA (PubMed:25341963). The C-terminal region mimics outer membrane protein beta strands (PubMed:25994932). This region (residues 963-1138) consists of a concave, taco-shaped beta sheet with a hydrophobic interior, which can accommodate and shield the hydrophobic side of an amphipathic beta strand, potentially allowing TamB to chaperone nascent membrane proteins across the periplasm to TamA in the outer membrane (PubMed:29129383).</text>
</comment>
<comment type="disruption phenotype">
    <text evidence="2 7 8">Loss of cell aggregation when adhesins are over-expressed in a double tamA-tamB deletion mutant (PubMed:22466966). The single mutant does not exhibit growth defects but it shows a slight increase in outer membrane permeability (PubMed:34781743). The tamB-yhdP double mutant shows defects in outer membrane lipid homeostasis and sensitivity to bile salts and various antibiotics such as vancomycin (PubMed:34781743, PubMed:35226662). The loss of tamB and yhdP severely compromises the integrity of the cell envelope, and causes lysis and alterations to cellular morphology (PubMed:34781743, PubMed:35226662). The double mutant results in a more visible rounding of the cell leading to increased cell width, decreased cell length, and a significant decrease in cell surface area (PubMed:35226662). The absence of tamB and yhdP also leads to excess amounts of outer membrane vesicles (OMVs) that are rich in lipopolysaccharides, presumably to compensate for the lack of proper phospholipid transport to the outer membrane and to maintain outer membrane integrity (PubMed:35226662). Deletion of tamB, ydbH and yhdP is lethal (PubMed:34781743, PubMed:35226662).</text>
</comment>
<comment type="miscellaneous">
    <text evidence="4">TamB is widely distributed across the majority of Gram-negative bacterial lineages and is far more widely distributed than its partner TamA.</text>
</comment>
<comment type="similarity">
    <text evidence="13">Belongs to the TamB family.</text>
</comment>
<comment type="sequence caution" evidence="13">
    <conflict type="frameshift">
        <sequence resource="EMBL-CDS" id="AAA97118"/>
    </conflict>
    <text>Produces two separate ORFs.</text>
</comment>